<comment type="function">
    <text evidence="3">Replicates viral genomic DNA. The replication complex is composed of six viral proteins: the DNA polymerase, processivity factor, primase, primase-associated factor, helicase, and ssDNA-binding protein. Additionally, the polymerase contains an intrinsic ribonuclease H (RNase H) activity that specifically degrades RNA/DNA heteroduplexes or duplex DNA substrates in the 5' to 3' direction. Therefore, it can catalyze the excision of the RNA primers that initiate the synthesis of Okazaki fragments at a replication fork during viral DNA replication.</text>
</comment>
<comment type="catalytic activity">
    <reaction>
        <text>DNA(n) + a 2'-deoxyribonucleoside 5'-triphosphate = DNA(n+1) + diphosphate</text>
        <dbReference type="Rhea" id="RHEA:22508"/>
        <dbReference type="Rhea" id="RHEA-COMP:17339"/>
        <dbReference type="Rhea" id="RHEA-COMP:17340"/>
        <dbReference type="ChEBI" id="CHEBI:33019"/>
        <dbReference type="ChEBI" id="CHEBI:61560"/>
        <dbReference type="ChEBI" id="CHEBI:173112"/>
        <dbReference type="EC" id="2.7.7.7"/>
    </reaction>
</comment>
<comment type="catalytic activity">
    <reaction>
        <text>Endonucleolytic cleavage to 5'-phosphomonoester.</text>
        <dbReference type="EC" id="3.1.26.4"/>
    </reaction>
</comment>
<comment type="subunit">
    <text evidence="1">Forms a complex with the ssDNA-binding protein UL29, the DNA polymerase processivity factor, and the alkaline exonuclease. Interacts with the putative helicase-primase complex subunit UL8; this interaction may coordinate leading and lagging strand DNA synthesis at the replication fork (By similarity).</text>
</comment>
<comment type="interaction">
    <interactant intactId="EBI-8615017">
        <id>P04293</id>
    </interactant>
    <interactant intactId="EBI-1029310">
        <id>P10226</id>
        <label>UL42</label>
    </interactant>
    <organismsDiffer>false</organismsDiffer>
    <experiments>3</experiments>
</comment>
<comment type="interaction">
    <interactant intactId="EBI-8615017">
        <id>P04293</id>
    </interactant>
    <interactant intactId="EBI-7185538">
        <id>P10192</id>
        <label>UL8</label>
    </interactant>
    <organismsDiffer>false</organismsDiffer>
    <experiments>4</experiments>
</comment>
<comment type="subcellular location">
    <subcellularLocation>
        <location evidence="4">Host nucleus</location>
    </subcellularLocation>
    <text evidence="1">The protein is present at discrete sites in nuclei, called replication compartments where viral DNA replication occurs.</text>
</comment>
<comment type="similarity">
    <text evidence="4">Belongs to the DNA polymerase type-B family.</text>
</comment>
<comment type="sequence caution" evidence="4">
    <conflict type="frameshift">
        <sequence resource="EMBL-CDS" id="CAA26941"/>
    </conflict>
</comment>
<organismHost>
    <name type="scientific">Homo sapiens</name>
    <name type="common">Human</name>
    <dbReference type="NCBI Taxonomy" id="9606"/>
</organismHost>
<keyword id="KW-0002">3D-structure</keyword>
<keyword id="KW-0235">DNA replication</keyword>
<keyword id="KW-0238">DNA-binding</keyword>
<keyword id="KW-0239">DNA-directed DNA polymerase</keyword>
<keyword id="KW-0255">Endonuclease</keyword>
<keyword id="KW-1048">Host nucleus</keyword>
<keyword id="KW-0378">Hydrolase</keyword>
<keyword id="KW-0511">Multifunctional enzyme</keyword>
<keyword id="KW-0540">Nuclease</keyword>
<keyword id="KW-0548">Nucleotidyltransferase</keyword>
<keyword id="KW-1185">Reference proteome</keyword>
<keyword id="KW-0808">Transferase</keyword>
<keyword id="KW-1194">Viral DNA replication</keyword>
<reference key="1">
    <citation type="journal article" date="1988" name="J. Gen. Virol.">
        <title>The complete DNA sequence of the long unique region in the genome of herpes simplex virus type 1.</title>
        <authorList>
            <person name="McGeoch D.J."/>
            <person name="Dalrymple M.A."/>
            <person name="Davison A.J."/>
            <person name="Dolan A."/>
            <person name="Frame M.C."/>
            <person name="McNab D."/>
            <person name="Perry L.J."/>
            <person name="Scott J.E."/>
            <person name="Taylor P."/>
        </authorList>
    </citation>
    <scope>NUCLEOTIDE SEQUENCE [LARGE SCALE GENOMIC DNA]</scope>
</reference>
<reference key="2">
    <citation type="journal article" date="1985" name="Nucleic Acids Res.">
        <title>DNA sequence of the region in the genome of herpes simplex virus type 1 containing the genes for DNA polymerase and the major DNA binding protein.</title>
        <authorList>
            <person name="Quinn J.P."/>
            <person name="McGeoch D.J."/>
        </authorList>
    </citation>
    <scope>NUCLEOTIDE SEQUENCE [GENOMIC DNA]</scope>
</reference>
<reference key="3">
    <citation type="journal article" date="2007" name="Microbes Infect.">
        <title>Determination and analysis of the DNA sequence of highly attenuated herpes simplex virus type 1 mutant HF10, a potential oncolytic virus.</title>
        <authorList>
            <person name="Ushijima Y."/>
            <person name="Luo C."/>
            <person name="Goshima F."/>
            <person name="Yamauchi Y."/>
            <person name="Kimura H."/>
            <person name="Nishiyama Y."/>
        </authorList>
    </citation>
    <scope>NUCLEOTIDE SEQUENCE [LARGE SCALE GENOMIC DNA]</scope>
    <source>
        <strain>Nonneuroinvasive mutant HF10</strain>
    </source>
</reference>
<reference key="4">
    <citation type="submission" date="2008-12" db="EMBL/GenBank/DDBJ databases">
        <title>Herpes simplex virus type 1 bacterial artificial chromosome.</title>
        <authorList>
            <person name="Cunningham C."/>
            <person name="Davison A.J."/>
        </authorList>
    </citation>
    <scope>NUCLEOTIDE SEQUENCE [LARGE SCALE GENOMIC DNA]</scope>
    <source>
        <strain>17 syn+</strain>
    </source>
</reference>
<reference key="5">
    <citation type="journal article" date="1989" name="J. Biol. Chem.">
        <title>Herpes simplex-1 DNA polymerase. Identification of an intrinsic 5'----3' exonuclease with ribonuclease H activity.</title>
        <authorList>
            <person name="Crute J.J."/>
            <person name="Lehman I.R."/>
        </authorList>
    </citation>
    <scope>FUNCTION</scope>
</reference>
<reference key="6">
    <citation type="journal article" date="1997" name="J. Virol.">
        <title>The catalytic subunit of the DNA polymerase of herpes simplex virus type 1 interacts specifically with the C terminus of the UL8 component of the viral helicase-primase complex.</title>
        <authorList>
            <person name="Marsden H.S."/>
            <person name="McLean G.W."/>
            <person name="Barnard E.C."/>
            <person name="Francis G.J."/>
            <person name="MacEachran K."/>
            <person name="Murphy M."/>
            <person name="McVey G."/>
            <person name="Cross A."/>
            <person name="Abbotts A.P."/>
            <person name="Stow N.D."/>
        </authorList>
    </citation>
    <scope>INTERACTION WITH UL8</scope>
</reference>
<name>DPOL_HHV11</name>
<dbReference type="EC" id="2.7.7.7"/>
<dbReference type="EC" id="3.1.26.4"/>
<dbReference type="EMBL" id="X14112">
    <property type="protein sequence ID" value="CAA32323.1"/>
    <property type="molecule type" value="Genomic_DNA"/>
</dbReference>
<dbReference type="EMBL" id="X03181">
    <property type="protein sequence ID" value="CAA26941.1"/>
    <property type="status" value="ALT_FRAME"/>
    <property type="molecule type" value="Genomic_DNA"/>
</dbReference>
<dbReference type="EMBL" id="DQ889502">
    <property type="protein sequence ID" value="ABI63492.1"/>
    <property type="molecule type" value="Genomic_DNA"/>
</dbReference>
<dbReference type="EMBL" id="FJ593289">
    <property type="protein sequence ID" value="ACM62253.1"/>
    <property type="molecule type" value="Genomic_DNA"/>
</dbReference>
<dbReference type="PIR" id="A00715">
    <property type="entry name" value="DJBEV1"/>
</dbReference>
<dbReference type="PIR" id="C30085">
    <property type="entry name" value="DJBEH7"/>
</dbReference>
<dbReference type="RefSeq" id="YP_009137105.1">
    <property type="nucleotide sequence ID" value="NC_001806.2"/>
</dbReference>
<dbReference type="PDB" id="7LUF">
    <property type="method" value="X-ray"/>
    <property type="resolution" value="3.50 A"/>
    <property type="chains" value="A/B=43-1197"/>
</dbReference>
<dbReference type="PDB" id="8OJ6">
    <property type="method" value="EM"/>
    <property type="resolution" value="2.41 A"/>
    <property type="chains" value="A=1-1235"/>
</dbReference>
<dbReference type="PDB" id="8OJ7">
    <property type="method" value="EM"/>
    <property type="resolution" value="2.46 A"/>
    <property type="chains" value="A=1-1235"/>
</dbReference>
<dbReference type="PDB" id="8OJA">
    <property type="method" value="EM"/>
    <property type="resolution" value="1.87 A"/>
    <property type="chains" value="A=1-1235"/>
</dbReference>
<dbReference type="PDB" id="8OJB">
    <property type="method" value="EM"/>
    <property type="resolution" value="1.90 A"/>
    <property type="chains" value="A=1-1235"/>
</dbReference>
<dbReference type="PDB" id="8OJC">
    <property type="method" value="EM"/>
    <property type="resolution" value="2.08 A"/>
    <property type="chains" value="A=1-1235"/>
</dbReference>
<dbReference type="PDB" id="8OJD">
    <property type="method" value="EM"/>
    <property type="resolution" value="2.46 A"/>
    <property type="chains" value="A=1-1235"/>
</dbReference>
<dbReference type="PDB" id="9ENP">
    <property type="method" value="EM"/>
    <property type="resolution" value="2.12 A"/>
    <property type="chains" value="A=1-1235"/>
</dbReference>
<dbReference type="PDB" id="9ENQ">
    <property type="method" value="EM"/>
    <property type="resolution" value="2.12 A"/>
    <property type="chains" value="A=1-1235"/>
</dbReference>
<dbReference type="PDBsum" id="7LUF"/>
<dbReference type="PDBsum" id="8OJ6"/>
<dbReference type="PDBsum" id="8OJ7"/>
<dbReference type="PDBsum" id="8OJA"/>
<dbReference type="PDBsum" id="8OJB"/>
<dbReference type="PDBsum" id="8OJC"/>
<dbReference type="PDBsum" id="8OJD"/>
<dbReference type="PDBsum" id="9ENP"/>
<dbReference type="PDBsum" id="9ENQ"/>
<dbReference type="EMDB" id="EMD-16906"/>
<dbReference type="EMDB" id="EMD-16907"/>
<dbReference type="EMDB" id="EMD-16909"/>
<dbReference type="EMDB" id="EMD-16910"/>
<dbReference type="EMDB" id="EMD-16911"/>
<dbReference type="EMDB" id="EMD-16912"/>
<dbReference type="EMDB" id="EMD-19837"/>
<dbReference type="EMDB" id="EMD-19838"/>
<dbReference type="SMR" id="P04293"/>
<dbReference type="BioGRID" id="971473">
    <property type="interactions" value="3"/>
</dbReference>
<dbReference type="IntAct" id="P04293">
    <property type="interactions" value="2"/>
</dbReference>
<dbReference type="MINT" id="P04293"/>
<dbReference type="BindingDB" id="P04293"/>
<dbReference type="ChEMBL" id="CHEMBL1872"/>
<dbReference type="DrugBank" id="DB00787">
    <property type="generic name" value="Acyclovir"/>
</dbReference>
<dbReference type="DrugBank" id="DB13868">
    <property type="generic name" value="Adefovir"/>
</dbReference>
<dbReference type="DrugBank" id="DB17742">
    <property type="generic name" value="Aphidicolin"/>
</dbReference>
<dbReference type="DrugBank" id="DB12480">
    <property type="generic name" value="Betulinic Acid"/>
</dbReference>
<dbReference type="DrugBank" id="DB00369">
    <property type="generic name" value="Cidofovir"/>
</dbReference>
<dbReference type="DrugBank" id="DB00987">
    <property type="generic name" value="Cytarabine"/>
</dbReference>
<dbReference type="DrugBank" id="DB00426">
    <property type="generic name" value="Famciclovir"/>
</dbReference>
<dbReference type="DrugBank" id="DB15427">
    <property type="generic name" value="Fialuridine"/>
</dbReference>
<dbReference type="DrugBank" id="DB00529">
    <property type="generic name" value="Foscarnet"/>
</dbReference>
<dbReference type="DrugBank" id="DB01004">
    <property type="generic name" value="Ganciclovir"/>
</dbReference>
<dbReference type="DrugBank" id="DB02857">
    <property type="generic name" value="Guanosine"/>
</dbReference>
<dbReference type="DrugBank" id="DB01972">
    <property type="generic name" value="Guanosine-5'-Monophosphate"/>
</dbReference>
<dbReference type="DrugBank" id="DB12606">
    <property type="generic name" value="Netivudine"/>
</dbReference>
<dbReference type="DrugBank" id="DB00299">
    <property type="generic name" value="Penciclovir"/>
</dbReference>
<dbReference type="DrugBank" id="DB12762">
    <property type="generic name" value="Rabacfosadine"/>
</dbReference>
<dbReference type="DrugBank" id="DB02452">
    <property type="generic name" value="Thymidine 5'-triphosphate"/>
</dbReference>
<dbReference type="DrugBank" id="DB15588">
    <property type="generic name" value="Ursolic acid"/>
</dbReference>
<dbReference type="DrugBank" id="DB00577">
    <property type="generic name" value="Valaciclovir"/>
</dbReference>
<dbReference type="DrugBank" id="DB01610">
    <property type="generic name" value="Valganciclovir"/>
</dbReference>
<dbReference type="DrugBank" id="DB15651">
    <property type="generic name" value="Valomaciclovir stearate"/>
</dbReference>
<dbReference type="DrugBank" id="DB00194">
    <property type="generic name" value="Vidarabine"/>
</dbReference>
<dbReference type="DrugCentral" id="P04293"/>
<dbReference type="GeneID" id="2703462"/>
<dbReference type="KEGG" id="vg:2703462"/>
<dbReference type="PRO" id="PR:P04293"/>
<dbReference type="Proteomes" id="UP000009294">
    <property type="component" value="Segment"/>
</dbReference>
<dbReference type="Proteomes" id="UP000180652">
    <property type="component" value="Segment"/>
</dbReference>
<dbReference type="GO" id="GO:0042575">
    <property type="term" value="C:DNA polymerase complex"/>
    <property type="evidence" value="ECO:0000314"/>
    <property type="project" value="GO_Central"/>
</dbReference>
<dbReference type="GO" id="GO:0042025">
    <property type="term" value="C:host cell nucleus"/>
    <property type="evidence" value="ECO:0000314"/>
    <property type="project" value="UniProtKB"/>
</dbReference>
<dbReference type="GO" id="GO:0008409">
    <property type="term" value="F:5'-3' exonuclease activity"/>
    <property type="evidence" value="ECO:0000314"/>
    <property type="project" value="UniProtKB"/>
</dbReference>
<dbReference type="GO" id="GO:0003677">
    <property type="term" value="F:DNA binding"/>
    <property type="evidence" value="ECO:0007669"/>
    <property type="project" value="UniProtKB-KW"/>
</dbReference>
<dbReference type="GO" id="GO:0034061">
    <property type="term" value="F:DNA polymerase activity"/>
    <property type="evidence" value="ECO:0000314"/>
    <property type="project" value="AgBase"/>
</dbReference>
<dbReference type="GO" id="GO:0003887">
    <property type="term" value="F:DNA-directed DNA polymerase activity"/>
    <property type="evidence" value="ECO:0007669"/>
    <property type="project" value="UniProtKB-KW"/>
</dbReference>
<dbReference type="GO" id="GO:0000166">
    <property type="term" value="F:nucleotide binding"/>
    <property type="evidence" value="ECO:0007669"/>
    <property type="project" value="InterPro"/>
</dbReference>
<dbReference type="GO" id="GO:0004523">
    <property type="term" value="F:RNA-DNA hybrid ribonuclease activity"/>
    <property type="evidence" value="ECO:0000314"/>
    <property type="project" value="UniProtKB"/>
</dbReference>
<dbReference type="GO" id="GO:0039686">
    <property type="term" value="P:bidirectional double-stranded viral DNA replication"/>
    <property type="evidence" value="ECO:0000314"/>
    <property type="project" value="UniProtKB"/>
</dbReference>
<dbReference type="GO" id="GO:0006261">
    <property type="term" value="P:DNA-templated DNA replication"/>
    <property type="evidence" value="ECO:0007669"/>
    <property type="project" value="TreeGrafter"/>
</dbReference>
<dbReference type="FunFam" id="1.10.287.690:FF:000006">
    <property type="entry name" value="DNA polymerase"/>
    <property type="match status" value="1"/>
</dbReference>
<dbReference type="FunFam" id="3.30.342.10:FF:000013">
    <property type="entry name" value="DNA polymerase"/>
    <property type="match status" value="1"/>
</dbReference>
<dbReference type="FunFam" id="3.30.420.10:FF:000004">
    <property type="entry name" value="DNA polymerase"/>
    <property type="match status" value="1"/>
</dbReference>
<dbReference type="FunFam" id="1.10.132.60:FF:000011">
    <property type="entry name" value="DNA polymerase catalytic subunit"/>
    <property type="match status" value="1"/>
</dbReference>
<dbReference type="Gene3D" id="1.10.132.60">
    <property type="entry name" value="DNA polymerase family B, C-terminal domain"/>
    <property type="match status" value="1"/>
</dbReference>
<dbReference type="Gene3D" id="3.30.342.10">
    <property type="entry name" value="DNA Polymerase, chain B, domain 1"/>
    <property type="match status" value="1"/>
</dbReference>
<dbReference type="Gene3D" id="1.10.287.690">
    <property type="entry name" value="Helix hairpin bin"/>
    <property type="match status" value="1"/>
</dbReference>
<dbReference type="Gene3D" id="3.90.1600.10">
    <property type="entry name" value="Palm domain of DNA polymerase"/>
    <property type="match status" value="1"/>
</dbReference>
<dbReference type="Gene3D" id="3.30.420.10">
    <property type="entry name" value="Ribonuclease H-like superfamily/Ribonuclease H"/>
    <property type="match status" value="1"/>
</dbReference>
<dbReference type="InterPro" id="IPR006172">
    <property type="entry name" value="DNA-dir_DNA_pol_B"/>
</dbReference>
<dbReference type="InterPro" id="IPR017964">
    <property type="entry name" value="DNA-dir_DNA_pol_B_CS"/>
</dbReference>
<dbReference type="InterPro" id="IPR006133">
    <property type="entry name" value="DNA-dir_DNA_pol_B_exonuc"/>
</dbReference>
<dbReference type="InterPro" id="IPR006134">
    <property type="entry name" value="DNA-dir_DNA_pol_B_multi_dom"/>
</dbReference>
<dbReference type="InterPro" id="IPR043502">
    <property type="entry name" value="DNA/RNA_pol_sf"/>
</dbReference>
<dbReference type="InterPro" id="IPR042087">
    <property type="entry name" value="DNA_pol_B_thumb"/>
</dbReference>
<dbReference type="InterPro" id="IPR023211">
    <property type="entry name" value="DNA_pol_palm_dom_sf"/>
</dbReference>
<dbReference type="InterPro" id="IPR050240">
    <property type="entry name" value="DNA_pol_type-B"/>
</dbReference>
<dbReference type="InterPro" id="IPR021639">
    <property type="entry name" value="DNAPolymera_Pol_C"/>
</dbReference>
<dbReference type="InterPro" id="IPR012337">
    <property type="entry name" value="RNaseH-like_sf"/>
</dbReference>
<dbReference type="InterPro" id="IPR036397">
    <property type="entry name" value="RNaseH_sf"/>
</dbReference>
<dbReference type="PANTHER" id="PTHR10322">
    <property type="entry name" value="DNA POLYMERASE CATALYTIC SUBUNIT"/>
    <property type="match status" value="1"/>
</dbReference>
<dbReference type="PANTHER" id="PTHR10322:SF23">
    <property type="entry name" value="DNA POLYMERASE DELTA CATALYTIC SUBUNIT"/>
    <property type="match status" value="1"/>
</dbReference>
<dbReference type="Pfam" id="PF00136">
    <property type="entry name" value="DNA_pol_B"/>
    <property type="match status" value="1"/>
</dbReference>
<dbReference type="Pfam" id="PF03104">
    <property type="entry name" value="DNA_pol_B_exo1"/>
    <property type="match status" value="1"/>
</dbReference>
<dbReference type="Pfam" id="PF11590">
    <property type="entry name" value="DNAPolymera_Pol"/>
    <property type="match status" value="1"/>
</dbReference>
<dbReference type="PRINTS" id="PR00106">
    <property type="entry name" value="DNAPOLB"/>
</dbReference>
<dbReference type="SMART" id="SM00486">
    <property type="entry name" value="POLBc"/>
    <property type="match status" value="1"/>
</dbReference>
<dbReference type="SUPFAM" id="SSF56672">
    <property type="entry name" value="DNA/RNA polymerases"/>
    <property type="match status" value="1"/>
</dbReference>
<dbReference type="SUPFAM" id="SSF53098">
    <property type="entry name" value="Ribonuclease H-like"/>
    <property type="match status" value="1"/>
</dbReference>
<dbReference type="PROSITE" id="PS00116">
    <property type="entry name" value="DNA_POLYMERASE_B"/>
    <property type="match status" value="1"/>
</dbReference>
<protein>
    <recommendedName>
        <fullName>DNA polymerase catalytic subunit</fullName>
        <ecNumber>2.7.7.7</ecNumber>
        <ecNumber>3.1.26.4</ecNumber>
    </recommendedName>
</protein>
<accession>P04293</accession>
<accession>B9VQF8</accession>
<accession>Q09IA3</accession>
<organism>
    <name type="scientific">Human herpesvirus 1 (strain 17)</name>
    <name type="common">HHV-1</name>
    <name type="synonym">Human herpes simplex virus 1</name>
    <dbReference type="NCBI Taxonomy" id="10299"/>
    <lineage>
        <taxon>Viruses</taxon>
        <taxon>Duplodnaviria</taxon>
        <taxon>Heunggongvirae</taxon>
        <taxon>Peploviricota</taxon>
        <taxon>Herviviricetes</taxon>
        <taxon>Herpesvirales</taxon>
        <taxon>Orthoherpesviridae</taxon>
        <taxon>Alphaherpesvirinae</taxon>
        <taxon>Simplexvirus</taxon>
        <taxon>Simplexvirus humanalpha1</taxon>
        <taxon>Human herpesvirus 1</taxon>
    </lineage>
</organism>
<gene>
    <name type="ORF">UL30</name>
</gene>
<evidence type="ECO:0000250" key="1"/>
<evidence type="ECO:0000256" key="2">
    <source>
        <dbReference type="SAM" id="MobiDB-lite"/>
    </source>
</evidence>
<evidence type="ECO:0000269" key="3">
    <source>
    </source>
</evidence>
<evidence type="ECO:0000305" key="4"/>
<evidence type="ECO:0007829" key="5">
    <source>
        <dbReference type="PDB" id="7LUF"/>
    </source>
</evidence>
<evidence type="ECO:0007829" key="6">
    <source>
        <dbReference type="PDB" id="8OJ6"/>
    </source>
</evidence>
<evidence type="ECO:0007829" key="7">
    <source>
        <dbReference type="PDB" id="8OJ7"/>
    </source>
</evidence>
<evidence type="ECO:0007829" key="8">
    <source>
        <dbReference type="PDB" id="8OJA"/>
    </source>
</evidence>
<evidence type="ECO:0007829" key="9">
    <source>
        <dbReference type="PDB" id="8OJB"/>
    </source>
</evidence>
<evidence type="ECO:0007829" key="10">
    <source>
        <dbReference type="PDB" id="8OJD"/>
    </source>
</evidence>
<evidence type="ECO:0007829" key="11">
    <source>
        <dbReference type="PDB" id="9ENP"/>
    </source>
</evidence>
<sequence length="1235" mass="136421">MFSGGGGPLSPGGKSAARAASGFFAPAGPRGASRGPPPCLRQNFYNPYLAPVGTQQKPTGPTQRHTYYSECDEFRFIAPRVLDEDAPPEKRAGVHDGHLKRAPKVYCGGDERDVLRVGSGGFWPRRSRLWGGVDHAPAGFNPTVTVFHVYDILENVEHAYGMRAAQFHARFMDAITPTGTVITLLGLTPEGHRVAVHVYGTRQYFYMNKEEVDRHLQCRAPRDLCERMAAALRESPGASFRGISADHFEAEVVERTDVYYYETRPALFYRVYVRSGRVLSYLCDNFCPAIKKYEGGVDATTRFILDNPGFVTFGWYRLKPGRNNTLAQPAAPMAFGTSSDVEFNCTADNLAIEGGMSDLPAYKLMCFDIECKAGGEDELAFPVAGHPEDLVIQISCLLYDLSTTALEHVLLFSLGSCDLPESHLNELAARGLPTPVVLEFDSEFEMLLAFMTLVKQYGPEFVTGYNIINFDWPFLLAKLTDIYKVPLDGYGRMNGRGVFRVWDIGQSHFQKRSKIKVNGMVNIDMYGIITDKIKLSSYKLNAVAEAVLKDKKKDLSYRDIPAYYAAGPAQRGVIGEYCIQDSLLVGQLFFKFLPHLELSAVARLAGINITRTIYDGQQIRVFTCLLRLADQKGFILPDTQGRFRGAGGEAPKRPAAAREDEERPEEEGEDEDEREEGGGEREPEGARETAGRHVGYQGARVLDPTSGFHVNPVVVFDFASLYPSIIQAHNLCFSTLSLRADAVAHLEAGKDYLEIEVGGRRLFFVKAHVRESLLSILLRDWLAMRKQIRSRIPQSSPEEAVLLDKQQAAIKVVCNSVYGFTGVQHGLLPCLHVAATVTTIGREMLLATREYVHARWAAFEQLLADFPEAADMRAPGPYSMRIIYGDTDSIFVLCRGLTAAGLTAVGDKMASHISRALFLPPIKLECEKTFTKLLLIAKKKYIGVIYGGKMLIKGVDLVRKNNCAFINRTSRALVDLLFYDDTVSGAAAALAERPAEEWLARPLPEGLQAFGAVLVDAHRRITDPERDIQDFVLTAELSRHPRAYTNKRLAHLTVYYKLMARRAQVPSIKDRIPYVIVAQTREVEETVARLAALRELDAAAPGDEPAPPAALPSPAKRPRETPSPADPPGGASKPRKLLVSELAEDPAYAIAHGVALNTDYYFSHLLGAACVTFKALFGNNAKITESLLKRFIPEVWHPPDDVAARLRTAGFGAVGAGATAEETRRMLHRAFDTLA</sequence>
<proteinExistence type="evidence at protein level"/>
<feature type="chain" id="PRO_0000046511" description="DNA polymerase catalytic subunit">
    <location>
        <begin position="1"/>
        <end position="1235"/>
    </location>
</feature>
<feature type="region of interest" description="Disordered" evidence="2">
    <location>
        <begin position="640"/>
        <end position="692"/>
    </location>
</feature>
<feature type="region of interest" description="Disordered" evidence="2">
    <location>
        <begin position="1098"/>
        <end position="1134"/>
    </location>
</feature>
<feature type="compositionally biased region" description="Basic and acidic residues" evidence="2">
    <location>
        <begin position="650"/>
        <end position="661"/>
    </location>
</feature>
<feature type="compositionally biased region" description="Acidic residues" evidence="2">
    <location>
        <begin position="662"/>
        <end position="675"/>
    </location>
</feature>
<feature type="compositionally biased region" description="Basic and acidic residues" evidence="2">
    <location>
        <begin position="676"/>
        <end position="691"/>
    </location>
</feature>
<feature type="sequence variant" description="In strain: Nonneuroinvasive mutant HF10.">
    <original>S</original>
    <variation>G</variation>
    <location>
        <position position="33"/>
    </location>
</feature>
<feature type="sequence variant" description="In strain: Nonneuroinvasive mutant HF10.">
    <original>A</original>
    <variation>T</variation>
    <location>
        <position position="102"/>
    </location>
</feature>
<feature type="sequence variant" description="In strain: Nonneuroinvasive mutant HF10 and 17 syn+.">
    <original>A</original>
    <variation>R</variation>
    <location>
        <position position="330"/>
    </location>
</feature>
<feature type="sequence variant" description="In strain: Nonneuroinvasive mutant HF10.">
    <original>A</original>
    <variation>T</variation>
    <location>
        <position position="646"/>
    </location>
</feature>
<feature type="sequence variant" description="In strain: Nonneuroinvasive mutant HF10.">
    <original>L</original>
    <variation>F</variation>
    <location>
        <position position="802"/>
    </location>
</feature>
<feature type="sequence variant" description="In strain: Nonneuroinvasive mutant HF10.">
    <original>V</original>
    <variation>M</variation>
    <location>
        <position position="905"/>
    </location>
</feature>
<feature type="sequence variant" description="In strain: Nonneuroinvasive mutant HF10.">
    <original>A</original>
    <variation>T</variation>
    <location>
        <position position="1203"/>
    </location>
</feature>
<feature type="sequence variant" description="In strain: Nonneuroinvasive mutant HF10.">
    <original>TA</original>
    <variation>AT</variation>
    <location>
        <begin position="1208"/>
        <end position="1209"/>
    </location>
</feature>
<feature type="turn" evidence="5">
    <location>
        <begin position="47"/>
        <end position="49"/>
    </location>
</feature>
<feature type="strand" evidence="8">
    <location>
        <begin position="74"/>
        <end position="79"/>
    </location>
</feature>
<feature type="helix" evidence="8">
    <location>
        <begin position="80"/>
        <end position="82"/>
    </location>
</feature>
<feature type="strand" evidence="5">
    <location>
        <begin position="84"/>
        <end position="86"/>
    </location>
</feature>
<feature type="helix" evidence="8">
    <location>
        <begin position="88"/>
        <end position="90"/>
    </location>
</feature>
<feature type="strand" evidence="8">
    <location>
        <begin position="91"/>
        <end position="99"/>
    </location>
</feature>
<feature type="strand" evidence="8">
    <location>
        <begin position="104"/>
        <end position="107"/>
    </location>
</feature>
<feature type="strand" evidence="8">
    <location>
        <begin position="110"/>
        <end position="113"/>
    </location>
</feature>
<feature type="strand" evidence="7">
    <location>
        <begin position="118"/>
        <end position="120"/>
    </location>
</feature>
<feature type="strand" evidence="8">
    <location>
        <begin position="128"/>
        <end position="130"/>
    </location>
</feature>
<feature type="strand" evidence="8">
    <location>
        <begin position="145"/>
        <end position="157"/>
    </location>
</feature>
<feature type="turn" evidence="8">
    <location>
        <begin position="159"/>
        <end position="164"/>
    </location>
</feature>
<feature type="helix" evidence="8">
    <location>
        <begin position="169"/>
        <end position="174"/>
    </location>
</feature>
<feature type="strand" evidence="8">
    <location>
        <begin position="179"/>
        <end position="187"/>
    </location>
</feature>
<feature type="strand" evidence="8">
    <location>
        <begin position="193"/>
        <end position="199"/>
    </location>
</feature>
<feature type="strand" evidence="8">
    <location>
        <begin position="203"/>
        <end position="208"/>
    </location>
</feature>
<feature type="helix" evidence="8">
    <location>
        <begin position="209"/>
        <end position="216"/>
    </location>
</feature>
<feature type="helix" evidence="8">
    <location>
        <begin position="221"/>
        <end position="233"/>
    </location>
</feature>
<feature type="helix" evidence="8">
    <location>
        <begin position="236"/>
        <end position="238"/>
    </location>
</feature>
<feature type="turn" evidence="8">
    <location>
        <begin position="239"/>
        <end position="242"/>
    </location>
</feature>
<feature type="helix" evidence="8">
    <location>
        <begin position="245"/>
        <end position="247"/>
    </location>
</feature>
<feature type="strand" evidence="8">
    <location>
        <begin position="248"/>
        <end position="259"/>
    </location>
</feature>
<feature type="strand" evidence="8">
    <location>
        <begin position="266"/>
        <end position="274"/>
    </location>
</feature>
<feature type="helix" evidence="8">
    <location>
        <begin position="276"/>
        <end position="283"/>
    </location>
</feature>
<feature type="strand" evidence="9">
    <location>
        <begin position="292"/>
        <end position="294"/>
    </location>
</feature>
<feature type="helix" evidence="8">
    <location>
        <begin position="299"/>
        <end position="305"/>
    </location>
</feature>
<feature type="strand" evidence="8">
    <location>
        <begin position="312"/>
        <end position="318"/>
    </location>
</feature>
<feature type="helix" evidence="8">
    <location>
        <begin position="332"/>
        <end position="334"/>
    </location>
</feature>
<feature type="strand" evidence="10">
    <location>
        <begin position="336"/>
        <end position="338"/>
    </location>
</feature>
<feature type="strand" evidence="8">
    <location>
        <begin position="340"/>
        <end position="346"/>
    </location>
</feature>
<feature type="helix" evidence="8">
    <location>
        <begin position="347"/>
        <end position="349"/>
    </location>
</feature>
<feature type="strand" evidence="8">
    <location>
        <begin position="350"/>
        <end position="352"/>
    </location>
</feature>
<feature type="strand" evidence="8">
    <location>
        <begin position="363"/>
        <end position="372"/>
    </location>
</feature>
<feature type="strand" evidence="6">
    <location>
        <begin position="384"/>
        <end position="386"/>
    </location>
</feature>
<feature type="strand" evidence="8">
    <location>
        <begin position="389"/>
        <end position="400"/>
    </location>
</feature>
<feature type="turn" evidence="8">
    <location>
        <begin position="401"/>
        <end position="403"/>
    </location>
</feature>
<feature type="strand" evidence="8">
    <location>
        <begin position="406"/>
        <end position="415"/>
    </location>
</feature>
<feature type="helix" evidence="8">
    <location>
        <begin position="421"/>
        <end position="429"/>
    </location>
</feature>
<feature type="strand" evidence="8">
    <location>
        <begin position="436"/>
        <end position="442"/>
    </location>
</feature>
<feature type="helix" evidence="8">
    <location>
        <begin position="443"/>
        <end position="457"/>
    </location>
</feature>
<feature type="strand" evidence="8">
    <location>
        <begin position="460"/>
        <end position="466"/>
    </location>
</feature>
<feature type="turn" evidence="8">
    <location>
        <begin position="467"/>
        <end position="470"/>
    </location>
</feature>
<feature type="helix" evidence="8">
    <location>
        <begin position="471"/>
        <end position="481"/>
    </location>
</feature>
<feature type="helix" evidence="10">
    <location>
        <begin position="487"/>
        <end position="489"/>
    </location>
</feature>
<feature type="strand" evidence="8">
    <location>
        <begin position="490"/>
        <end position="496"/>
    </location>
</feature>
<feature type="strand" evidence="8">
    <location>
        <begin position="499"/>
        <end position="503"/>
    </location>
</feature>
<feature type="turn" evidence="9">
    <location>
        <begin position="508"/>
        <end position="511"/>
    </location>
</feature>
<feature type="strand" evidence="8">
    <location>
        <begin position="513"/>
        <end position="517"/>
    </location>
</feature>
<feature type="strand" evidence="8">
    <location>
        <begin position="520"/>
        <end position="524"/>
    </location>
</feature>
<feature type="helix" evidence="8">
    <location>
        <begin position="525"/>
        <end position="530"/>
    </location>
</feature>
<feature type="helix" evidence="8">
    <location>
        <begin position="540"/>
        <end position="547"/>
    </location>
</feature>
<feature type="turn" evidence="8">
    <location>
        <begin position="557"/>
        <end position="559"/>
    </location>
</feature>
<feature type="helix" evidence="8">
    <location>
        <begin position="560"/>
        <end position="566"/>
    </location>
</feature>
<feature type="helix" evidence="8">
    <location>
        <begin position="568"/>
        <end position="592"/>
    </location>
</feature>
<feature type="helix" evidence="8">
    <location>
        <begin position="594"/>
        <end position="605"/>
    </location>
</feature>
<feature type="helix" evidence="8">
    <location>
        <begin position="609"/>
        <end position="614"/>
    </location>
</feature>
<feature type="helix" evidence="8">
    <location>
        <begin position="618"/>
        <end position="631"/>
    </location>
</feature>
<feature type="strand" evidence="8">
    <location>
        <begin position="707"/>
        <end position="709"/>
    </location>
</feature>
<feature type="strand" evidence="8">
    <location>
        <begin position="713"/>
        <end position="718"/>
    </location>
</feature>
<feature type="helix" evidence="8">
    <location>
        <begin position="721"/>
        <end position="728"/>
    </location>
</feature>
<feature type="turn" evidence="8">
    <location>
        <begin position="733"/>
        <end position="735"/>
    </location>
</feature>
<feature type="strand" evidence="8">
    <location>
        <begin position="736"/>
        <end position="738"/>
    </location>
</feature>
<feature type="helix" evidence="8">
    <location>
        <begin position="740"/>
        <end position="742"/>
    </location>
</feature>
<feature type="turn" evidence="8">
    <location>
        <begin position="743"/>
        <end position="745"/>
    </location>
</feature>
<feature type="turn" evidence="8">
    <location>
        <begin position="749"/>
        <end position="751"/>
    </location>
</feature>
<feature type="strand" evidence="8">
    <location>
        <begin position="752"/>
        <end position="757"/>
    </location>
</feature>
<feature type="strand" evidence="8">
    <location>
        <begin position="760"/>
        <end position="765"/>
    </location>
</feature>
<feature type="turn" evidence="8">
    <location>
        <begin position="767"/>
        <end position="769"/>
    </location>
</feature>
<feature type="helix" evidence="8">
    <location>
        <begin position="773"/>
        <end position="791"/>
    </location>
</feature>
<feature type="helix" evidence="8">
    <location>
        <begin position="792"/>
        <end position="794"/>
    </location>
</feature>
<feature type="helix" evidence="8">
    <location>
        <begin position="797"/>
        <end position="815"/>
    </location>
</feature>
<feature type="helix" evidence="8">
    <location>
        <begin position="817"/>
        <end position="822"/>
    </location>
</feature>
<feature type="strand" evidence="8">
    <location>
        <begin position="826"/>
        <end position="828"/>
    </location>
</feature>
<feature type="helix" evidence="8">
    <location>
        <begin position="831"/>
        <end position="855"/>
    </location>
</feature>
<feature type="strand" evidence="11">
    <location>
        <begin position="856"/>
        <end position="858"/>
    </location>
</feature>
<feature type="helix" evidence="8">
    <location>
        <begin position="859"/>
        <end position="865"/>
    </location>
</feature>
<feature type="helix" evidence="8">
    <location>
        <begin position="869"/>
        <end position="872"/>
    </location>
</feature>
<feature type="strand" evidence="8">
    <location>
        <begin position="879"/>
        <end position="885"/>
    </location>
</feature>
<feature type="strand" evidence="8">
    <location>
        <begin position="887"/>
        <end position="895"/>
    </location>
</feature>
<feature type="strand" evidence="5">
    <location>
        <begin position="899"/>
        <end position="901"/>
    </location>
</feature>
<feature type="helix" evidence="8">
    <location>
        <begin position="902"/>
        <end position="917"/>
    </location>
</feature>
<feature type="strand" evidence="8">
    <location>
        <begin position="924"/>
        <end position="937"/>
    </location>
</feature>
<feature type="strand" evidence="8">
    <location>
        <begin position="940"/>
        <end position="945"/>
    </location>
</feature>
<feature type="strand" evidence="8">
    <location>
        <begin position="950"/>
        <end position="954"/>
    </location>
</feature>
<feature type="helix" evidence="6">
    <location>
        <begin position="956"/>
        <end position="958"/>
    </location>
</feature>
<feature type="strand" evidence="6">
    <location>
        <begin position="960"/>
        <end position="962"/>
    </location>
</feature>
<feature type="helix" evidence="8">
    <location>
        <begin position="964"/>
        <end position="979"/>
    </location>
</feature>
<feature type="helix" evidence="8">
    <location>
        <begin position="981"/>
        <end position="989"/>
    </location>
</feature>
<feature type="helix" evidence="8">
    <location>
        <begin position="990"/>
        <end position="992"/>
    </location>
</feature>
<feature type="helix" evidence="8">
    <location>
        <begin position="995"/>
        <end position="999"/>
    </location>
</feature>
<feature type="turn" evidence="11">
    <location>
        <begin position="1005"/>
        <end position="1007"/>
    </location>
</feature>
<feature type="helix" evidence="8">
    <location>
        <begin position="1008"/>
        <end position="1022"/>
    </location>
</feature>
<feature type="strand" evidence="5">
    <location>
        <begin position="1023"/>
        <end position="1026"/>
    </location>
</feature>
<feature type="helix" evidence="8">
    <location>
        <begin position="1028"/>
        <end position="1031"/>
    </location>
</feature>
<feature type="strand" evidence="8">
    <location>
        <begin position="1033"/>
        <end position="1036"/>
    </location>
</feature>
<feature type="helix" evidence="8">
    <location>
        <begin position="1041"/>
        <end position="1043"/>
    </location>
</feature>
<feature type="turn" evidence="10">
    <location>
        <begin position="1044"/>
        <end position="1046"/>
    </location>
</feature>
<feature type="helix" evidence="8">
    <location>
        <begin position="1050"/>
        <end position="1062"/>
    </location>
</feature>
<feature type="strand" evidence="8">
    <location>
        <begin position="1068"/>
        <end position="1077"/>
    </location>
</feature>
<feature type="helix" evidence="8">
    <location>
        <begin position="1082"/>
        <end position="1085"/>
    </location>
</feature>
<feature type="helix" evidence="8">
    <location>
        <begin position="1090"/>
        <end position="1093"/>
    </location>
</feature>
<feature type="turn" evidence="8">
    <location>
        <begin position="1139"/>
        <end position="1142"/>
    </location>
</feature>
<feature type="helix" evidence="8">
    <location>
        <begin position="1146"/>
        <end position="1151"/>
    </location>
</feature>
<feature type="helix" evidence="8">
    <location>
        <begin position="1158"/>
        <end position="1173"/>
    </location>
</feature>
<feature type="helix" evidence="8">
    <location>
        <begin position="1174"/>
        <end position="1177"/>
    </location>
</feature>
<feature type="helix" evidence="8">
    <location>
        <begin position="1181"/>
        <end position="1189"/>
    </location>
</feature>
<feature type="helix" evidence="5">
    <location>
        <begin position="1194"/>
        <end position="1196"/>
    </location>
</feature>
<feature type="helix" evidence="8">
    <location>
        <begin position="1200"/>
        <end position="1208"/>
    </location>
</feature>
<feature type="strand" evidence="8">
    <location>
        <begin position="1212"/>
        <end position="1215"/>
    </location>
</feature>
<feature type="helix" evidence="8">
    <location>
        <begin position="1220"/>
        <end position="1234"/>
    </location>
</feature>